<sequence>MKRTYQPSKIRRQRKHGFRHRMSTKNGRRVLASRRRKGRKVLSA</sequence>
<evidence type="ECO:0000255" key="1">
    <source>
        <dbReference type="HAMAP-Rule" id="MF_00391"/>
    </source>
</evidence>
<evidence type="ECO:0000256" key="2">
    <source>
        <dbReference type="SAM" id="MobiDB-lite"/>
    </source>
</evidence>
<evidence type="ECO:0000305" key="3"/>
<proteinExistence type="inferred from homology"/>
<name>RL34_STRU0</name>
<accession>B9DVU9</accession>
<feature type="chain" id="PRO_1000196126" description="Large ribosomal subunit protein bL34">
    <location>
        <begin position="1"/>
        <end position="44"/>
    </location>
</feature>
<feature type="region of interest" description="Disordered" evidence="2">
    <location>
        <begin position="1"/>
        <end position="44"/>
    </location>
</feature>
<comment type="similarity">
    <text evidence="1">Belongs to the bacterial ribosomal protein bL34 family.</text>
</comment>
<gene>
    <name evidence="1" type="primary">rpmH</name>
    <name type="ordered locus">SUB1659.1</name>
    <name type="ORF">SUB1659A</name>
</gene>
<organism>
    <name type="scientific">Streptococcus uberis (strain ATCC BAA-854 / 0140J)</name>
    <dbReference type="NCBI Taxonomy" id="218495"/>
    <lineage>
        <taxon>Bacteria</taxon>
        <taxon>Bacillati</taxon>
        <taxon>Bacillota</taxon>
        <taxon>Bacilli</taxon>
        <taxon>Lactobacillales</taxon>
        <taxon>Streptococcaceae</taxon>
        <taxon>Streptococcus</taxon>
    </lineage>
</organism>
<protein>
    <recommendedName>
        <fullName evidence="1">Large ribosomal subunit protein bL34</fullName>
    </recommendedName>
    <alternativeName>
        <fullName evidence="3">50S ribosomal protein L34</fullName>
    </alternativeName>
</protein>
<dbReference type="EMBL" id="AM946015">
    <property type="protein sequence ID" value="CAR43539.1"/>
    <property type="molecule type" value="Genomic_DNA"/>
</dbReference>
<dbReference type="RefSeq" id="WP_000831903.1">
    <property type="nucleotide sequence ID" value="NC_012004.1"/>
</dbReference>
<dbReference type="SMR" id="B9DVU9"/>
<dbReference type="STRING" id="218495.SUB1659A"/>
<dbReference type="GeneID" id="98394107"/>
<dbReference type="KEGG" id="sub:SUB1659A"/>
<dbReference type="eggNOG" id="COG0230">
    <property type="taxonomic scope" value="Bacteria"/>
</dbReference>
<dbReference type="HOGENOM" id="CLU_129938_2_0_9"/>
<dbReference type="OrthoDB" id="9804164at2"/>
<dbReference type="Proteomes" id="UP000000449">
    <property type="component" value="Chromosome"/>
</dbReference>
<dbReference type="GO" id="GO:1990904">
    <property type="term" value="C:ribonucleoprotein complex"/>
    <property type="evidence" value="ECO:0007669"/>
    <property type="project" value="UniProtKB-KW"/>
</dbReference>
<dbReference type="GO" id="GO:0005840">
    <property type="term" value="C:ribosome"/>
    <property type="evidence" value="ECO:0007669"/>
    <property type="project" value="UniProtKB-KW"/>
</dbReference>
<dbReference type="GO" id="GO:0003735">
    <property type="term" value="F:structural constituent of ribosome"/>
    <property type="evidence" value="ECO:0007669"/>
    <property type="project" value="InterPro"/>
</dbReference>
<dbReference type="GO" id="GO:0006412">
    <property type="term" value="P:translation"/>
    <property type="evidence" value="ECO:0007669"/>
    <property type="project" value="UniProtKB-UniRule"/>
</dbReference>
<dbReference type="FunFam" id="1.10.287.3980:FF:000001">
    <property type="entry name" value="Mitochondrial ribosomal protein L34"/>
    <property type="match status" value="1"/>
</dbReference>
<dbReference type="Gene3D" id="1.10.287.3980">
    <property type="match status" value="1"/>
</dbReference>
<dbReference type="HAMAP" id="MF_00391">
    <property type="entry name" value="Ribosomal_bL34"/>
    <property type="match status" value="1"/>
</dbReference>
<dbReference type="InterPro" id="IPR000271">
    <property type="entry name" value="Ribosomal_bL34"/>
</dbReference>
<dbReference type="InterPro" id="IPR020939">
    <property type="entry name" value="Ribosomal_bL34_CS"/>
</dbReference>
<dbReference type="NCBIfam" id="TIGR01030">
    <property type="entry name" value="rpmH_bact"/>
    <property type="match status" value="1"/>
</dbReference>
<dbReference type="PANTHER" id="PTHR14503:SF4">
    <property type="entry name" value="LARGE RIBOSOMAL SUBUNIT PROTEIN BL34M"/>
    <property type="match status" value="1"/>
</dbReference>
<dbReference type="PANTHER" id="PTHR14503">
    <property type="entry name" value="MITOCHONDRIAL RIBOSOMAL PROTEIN 34 FAMILY MEMBER"/>
    <property type="match status" value="1"/>
</dbReference>
<dbReference type="Pfam" id="PF00468">
    <property type="entry name" value="Ribosomal_L34"/>
    <property type="match status" value="1"/>
</dbReference>
<dbReference type="PROSITE" id="PS00784">
    <property type="entry name" value="RIBOSOMAL_L34"/>
    <property type="match status" value="1"/>
</dbReference>
<keyword id="KW-1185">Reference proteome</keyword>
<keyword id="KW-0687">Ribonucleoprotein</keyword>
<keyword id="KW-0689">Ribosomal protein</keyword>
<reference key="1">
    <citation type="journal article" date="2009" name="BMC Genomics">
        <title>Evidence for niche adaptation in the genome of the bovine pathogen Streptococcus uberis.</title>
        <authorList>
            <person name="Ward P.N."/>
            <person name="Holden M.T.G."/>
            <person name="Leigh J.A."/>
            <person name="Lennard N."/>
            <person name="Bignell A."/>
            <person name="Barron A."/>
            <person name="Clark L."/>
            <person name="Quail M.A."/>
            <person name="Woodward J."/>
            <person name="Barrell B.G."/>
            <person name="Egan S.A."/>
            <person name="Field T.R."/>
            <person name="Maskell D."/>
            <person name="Kehoe M."/>
            <person name="Dowson C.G."/>
            <person name="Chanter N."/>
            <person name="Whatmore A.M."/>
            <person name="Bentley S.D."/>
            <person name="Parkhill J."/>
        </authorList>
    </citation>
    <scope>NUCLEOTIDE SEQUENCE [LARGE SCALE GENOMIC DNA]</scope>
    <source>
        <strain>ATCC BAA-854 / 0140J</strain>
    </source>
</reference>